<proteinExistence type="inferred from homology"/>
<sequence>MPTIQQLIRNKRQAAENKTKSPALQRSPQRRGVCTRVYTTTPKKPNSALRKVARVRLTSGFEVTAYIPGIGHNLQEHSVVLVRGGRVKDLPGVRYHIVRGTLDVVGVKDRRKGRSKYGVKRPK</sequence>
<dbReference type="EMBL" id="L07932">
    <property type="protein sequence ID" value="AAB01590.1"/>
    <property type="molecule type" value="Genomic_DNA"/>
</dbReference>
<dbReference type="EMBL" id="L07931">
    <property type="protein sequence ID" value="AAB01590.1"/>
    <property type="status" value="JOINED"/>
    <property type="molecule type" value="Genomic_DNA"/>
</dbReference>
<dbReference type="RefSeq" id="YP_009258358.1">
    <property type="nucleotide sequence ID" value="NC_030355.1"/>
</dbReference>
<dbReference type="SMR" id="P42344"/>
<dbReference type="GeneID" id="27984687"/>
<dbReference type="GO" id="GO:0009507">
    <property type="term" value="C:chloroplast"/>
    <property type="evidence" value="ECO:0007669"/>
    <property type="project" value="UniProtKB-SubCell"/>
</dbReference>
<dbReference type="GO" id="GO:0015935">
    <property type="term" value="C:small ribosomal subunit"/>
    <property type="evidence" value="ECO:0007669"/>
    <property type="project" value="InterPro"/>
</dbReference>
<dbReference type="GO" id="GO:0019843">
    <property type="term" value="F:rRNA binding"/>
    <property type="evidence" value="ECO:0007669"/>
    <property type="project" value="UniProtKB-UniRule"/>
</dbReference>
<dbReference type="GO" id="GO:0003735">
    <property type="term" value="F:structural constituent of ribosome"/>
    <property type="evidence" value="ECO:0007669"/>
    <property type="project" value="InterPro"/>
</dbReference>
<dbReference type="GO" id="GO:0006412">
    <property type="term" value="P:translation"/>
    <property type="evidence" value="ECO:0007669"/>
    <property type="project" value="UniProtKB-UniRule"/>
</dbReference>
<dbReference type="CDD" id="cd03368">
    <property type="entry name" value="Ribosomal_S12"/>
    <property type="match status" value="1"/>
</dbReference>
<dbReference type="FunFam" id="2.40.50.140:FF:000001">
    <property type="entry name" value="30S ribosomal protein S12"/>
    <property type="match status" value="1"/>
</dbReference>
<dbReference type="Gene3D" id="2.40.50.140">
    <property type="entry name" value="Nucleic acid-binding proteins"/>
    <property type="match status" value="1"/>
</dbReference>
<dbReference type="HAMAP" id="MF_00403_B">
    <property type="entry name" value="Ribosomal_uS12_B"/>
    <property type="match status" value="1"/>
</dbReference>
<dbReference type="InterPro" id="IPR012340">
    <property type="entry name" value="NA-bd_OB-fold"/>
</dbReference>
<dbReference type="InterPro" id="IPR006032">
    <property type="entry name" value="Ribosomal_uS12"/>
</dbReference>
<dbReference type="InterPro" id="IPR005679">
    <property type="entry name" value="Ribosomal_uS12_bac"/>
</dbReference>
<dbReference type="NCBIfam" id="TIGR00981">
    <property type="entry name" value="rpsL_bact"/>
    <property type="match status" value="1"/>
</dbReference>
<dbReference type="PANTHER" id="PTHR11652">
    <property type="entry name" value="30S RIBOSOMAL PROTEIN S12 FAMILY MEMBER"/>
    <property type="match status" value="1"/>
</dbReference>
<dbReference type="Pfam" id="PF00164">
    <property type="entry name" value="Ribosom_S12_S23"/>
    <property type="match status" value="1"/>
</dbReference>
<dbReference type="PIRSF" id="PIRSF002133">
    <property type="entry name" value="Ribosomal_S12/S23"/>
    <property type="match status" value="1"/>
</dbReference>
<dbReference type="PRINTS" id="PR01034">
    <property type="entry name" value="RIBOSOMALS12"/>
</dbReference>
<dbReference type="SUPFAM" id="SSF50249">
    <property type="entry name" value="Nucleic acid-binding proteins"/>
    <property type="match status" value="1"/>
</dbReference>
<dbReference type="PROSITE" id="PS00055">
    <property type="entry name" value="RIBOSOMAL_S12"/>
    <property type="match status" value="1"/>
</dbReference>
<accession>P42344</accession>
<keyword id="KW-0150">Chloroplast</keyword>
<keyword id="KW-0934">Plastid</keyword>
<keyword id="KW-0687">Ribonucleoprotein</keyword>
<keyword id="KW-0689">Ribosomal protein</keyword>
<keyword id="KW-0694">RNA-binding</keyword>
<keyword id="KW-0699">rRNA-binding</keyword>
<evidence type="ECO:0000250" key="1"/>
<evidence type="ECO:0000256" key="2">
    <source>
        <dbReference type="SAM" id="MobiDB-lite"/>
    </source>
</evidence>
<evidence type="ECO:0000305" key="3"/>
<comment type="function">
    <text evidence="1">With S4 and S5 plays an important role in translational accuracy. Located at the interface of the 30S and 50S subunits (By similarity).</text>
</comment>
<comment type="subunit">
    <text evidence="1">Part of the 30S ribosomal subunit.</text>
</comment>
<comment type="subcellular location">
    <subcellularLocation>
        <location>Plastid</location>
        <location>Chloroplast</location>
    </subcellularLocation>
</comment>
<comment type="similarity">
    <text evidence="3">Belongs to the universal ribosomal protein uS12 family.</text>
</comment>
<gene>
    <name type="primary">rps12</name>
</gene>
<reference key="1">
    <citation type="journal article" date="1993" name="J. Phycol.">
        <title>The rps12 gene in Spirogyra maxima (Chlorophyta) and its evolutionary significance.</title>
        <authorList>
            <person name="Lew K.A."/>
            <person name="Manhart J.R."/>
        </authorList>
    </citation>
    <scope>NUCLEOTIDE SEQUENCE [GENOMIC DNA]</scope>
</reference>
<feature type="chain" id="PRO_0000146428" description="Small ribosomal subunit protein uS12c">
    <location>
        <begin position="1"/>
        <end position="123"/>
    </location>
</feature>
<feature type="region of interest" description="Disordered" evidence="2">
    <location>
        <begin position="9"/>
        <end position="31"/>
    </location>
</feature>
<organism>
    <name type="scientific">Spirogyra maxima</name>
    <name type="common">Green alga</name>
    <dbReference type="NCBI Taxonomy" id="3180"/>
    <lineage>
        <taxon>Eukaryota</taxon>
        <taxon>Viridiplantae</taxon>
        <taxon>Streptophyta</taxon>
        <taxon>Zygnematophyceae</taxon>
        <taxon>Zygnematophycidae</taxon>
        <taxon>Zygnematales</taxon>
        <taxon>Zygnemataceae</taxon>
        <taxon>Spirogyra</taxon>
    </lineage>
</organism>
<name>RR12_SPIMX</name>
<protein>
    <recommendedName>
        <fullName evidence="3">Small ribosomal subunit protein uS12c</fullName>
    </recommendedName>
    <alternativeName>
        <fullName>30S ribosomal protein S12, chloroplastic</fullName>
    </alternativeName>
</protein>
<geneLocation type="chloroplast"/>